<organism>
    <name type="scientific">Sus scrofa</name>
    <name type="common">Pig</name>
    <dbReference type="NCBI Taxonomy" id="9823"/>
    <lineage>
        <taxon>Eukaryota</taxon>
        <taxon>Metazoa</taxon>
        <taxon>Chordata</taxon>
        <taxon>Craniata</taxon>
        <taxon>Vertebrata</taxon>
        <taxon>Euteleostomi</taxon>
        <taxon>Mammalia</taxon>
        <taxon>Eutheria</taxon>
        <taxon>Laurasiatheria</taxon>
        <taxon>Artiodactyla</taxon>
        <taxon>Suina</taxon>
        <taxon>Suidae</taxon>
        <taxon>Sus</taxon>
    </lineage>
</organism>
<feature type="propeptide" id="PRO_0000002487">
    <location>
        <begin position="1"/>
        <end position="5"/>
    </location>
</feature>
<feature type="chain" id="PRO_0000002488" description="Sodium/potassium-transporting ATPase subunit alpha-1">
    <location>
        <begin position="6"/>
        <end position="1021"/>
    </location>
</feature>
<feature type="topological domain" description="Cytoplasmic" evidence="5">
    <location>
        <begin position="6"/>
        <end position="85"/>
    </location>
</feature>
<feature type="transmembrane region" description="Helical" evidence="5">
    <location>
        <begin position="86"/>
        <end position="106"/>
    </location>
</feature>
<feature type="topological domain" description="Extracellular" evidence="5">
    <location>
        <begin position="107"/>
        <end position="129"/>
    </location>
</feature>
<feature type="transmembrane region" description="Helical" evidence="5">
    <location>
        <begin position="130"/>
        <end position="150"/>
    </location>
</feature>
<feature type="topological domain" description="Cytoplasmic" evidence="5">
    <location>
        <begin position="151"/>
        <end position="286"/>
    </location>
</feature>
<feature type="transmembrane region" description="Helical" evidence="5">
    <location>
        <begin position="287"/>
        <end position="306"/>
    </location>
</feature>
<feature type="topological domain" description="Extracellular" evidence="5">
    <location>
        <begin position="307"/>
        <end position="318"/>
    </location>
</feature>
<feature type="transmembrane region" description="Helical" evidence="5">
    <location>
        <begin position="319"/>
        <end position="336"/>
    </location>
</feature>
<feature type="topological domain" description="Cytoplasmic" evidence="5">
    <location>
        <begin position="337"/>
        <end position="770"/>
    </location>
</feature>
<feature type="transmembrane region" description="Helical" evidence="5">
    <location>
        <begin position="771"/>
        <end position="790"/>
    </location>
</feature>
<feature type="topological domain" description="Extracellular" evidence="5">
    <location>
        <begin position="791"/>
        <end position="800"/>
    </location>
</feature>
<feature type="transmembrane region" description="Helical" evidence="5">
    <location>
        <begin position="801"/>
        <end position="821"/>
    </location>
</feature>
<feature type="topological domain" description="Cytoplasmic" evidence="5">
    <location>
        <begin position="822"/>
        <end position="841"/>
    </location>
</feature>
<feature type="transmembrane region" description="Helical" evidence="5">
    <location>
        <begin position="842"/>
        <end position="864"/>
    </location>
</feature>
<feature type="topological domain" description="Extracellular" evidence="5">
    <location>
        <begin position="865"/>
        <end position="916"/>
    </location>
</feature>
<feature type="transmembrane region" description="Helical" evidence="5">
    <location>
        <begin position="917"/>
        <end position="936"/>
    </location>
</feature>
<feature type="topological domain" description="Cytoplasmic" evidence="5">
    <location>
        <begin position="937"/>
        <end position="949"/>
    </location>
</feature>
<feature type="transmembrane region" description="Helical" evidence="5">
    <location>
        <begin position="950"/>
        <end position="968"/>
    </location>
</feature>
<feature type="topological domain" description="Extracellular" evidence="5">
    <location>
        <begin position="969"/>
        <end position="983"/>
    </location>
</feature>
<feature type="transmembrane region" description="Helical" evidence="5">
    <location>
        <begin position="984"/>
        <end position="1004"/>
    </location>
</feature>
<feature type="topological domain" description="Cytoplasmic" evidence="5">
    <location>
        <begin position="1005"/>
        <end position="1021"/>
    </location>
</feature>
<feature type="region of interest" description="Disordered" evidence="6">
    <location>
        <begin position="1"/>
        <end position="37"/>
    </location>
</feature>
<feature type="region of interest" description="Phosphoinositide-3 kinase binding" evidence="1">
    <location>
        <begin position="80"/>
        <end position="82"/>
    </location>
</feature>
<feature type="region of interest" description="Disordered" evidence="6">
    <location>
        <begin position="214"/>
        <end position="233"/>
    </location>
</feature>
<feature type="region of interest" description="Mediates interaction with SCN7A" evidence="4">
    <location>
        <begin position="594"/>
        <end position="715"/>
    </location>
</feature>
<feature type="compositionally biased region" description="Basic and acidic residues" evidence="6">
    <location>
        <begin position="1"/>
        <end position="11"/>
    </location>
</feature>
<feature type="compositionally biased region" description="Basic and acidic residues" evidence="6">
    <location>
        <begin position="26"/>
        <end position="37"/>
    </location>
</feature>
<feature type="active site" description="4-aspartylphosphate intermediate" evidence="1">
    <location>
        <position position="374"/>
    </location>
</feature>
<feature type="binding site" evidence="1">
    <location>
        <position position="485"/>
    </location>
    <ligand>
        <name>ATP</name>
        <dbReference type="ChEBI" id="CHEBI:30616"/>
    </ligand>
</feature>
<feature type="binding site" evidence="1">
    <location>
        <position position="715"/>
    </location>
    <ligand>
        <name>Mg(2+)</name>
        <dbReference type="ChEBI" id="CHEBI:18420"/>
    </ligand>
</feature>
<feature type="binding site" evidence="1">
    <location>
        <position position="719"/>
    </location>
    <ligand>
        <name>Mg(2+)</name>
        <dbReference type="ChEBI" id="CHEBI:18420"/>
    </ligand>
</feature>
<feature type="modified residue" description="N6-acetyllysine" evidence="4">
    <location>
        <position position="9"/>
    </location>
</feature>
<feature type="modified residue" description="Phosphotyrosine" evidence="3">
    <location>
        <position position="10"/>
    </location>
</feature>
<feature type="modified residue" description="Phosphoserine; by PKC" evidence="3">
    <location>
        <position position="16"/>
    </location>
</feature>
<feature type="modified residue" description="N6-acetyllysine" evidence="4">
    <location>
        <position position="21"/>
    </location>
</feature>
<feature type="modified residue" description="Phosphoserine" evidence="3">
    <location>
        <position position="38"/>
    </location>
</feature>
<feature type="modified residue" description="Phosphoserine" evidence="3">
    <location>
        <position position="45"/>
    </location>
</feature>
<feature type="modified residue" description="Phosphoserine" evidence="4">
    <location>
        <position position="226"/>
    </location>
</feature>
<feature type="modified residue" description="Phosphotyrosine" evidence="4">
    <location>
        <position position="258"/>
    </location>
</feature>
<feature type="modified residue" description="Phosphoserine" evidence="3">
    <location>
        <position position="450"/>
    </location>
</feature>
<feature type="modified residue" description="Phosphoserine" evidence="3">
    <location>
        <position position="482"/>
    </location>
</feature>
<feature type="modified residue" description="Phosphotyrosine" evidence="2">
    <location>
        <position position="540"/>
    </location>
</feature>
<feature type="modified residue" description="N6-succinyllysine" evidence="4">
    <location>
        <position position="659"/>
    </location>
</feature>
<feature type="modified residue" description="Phosphoserine" evidence="4">
    <location>
        <position position="666"/>
    </location>
</feature>
<feature type="modified residue" description="Phosphoserine" evidence="4">
    <location>
        <position position="673"/>
    </location>
</feature>
<feature type="modified residue" description="Phosphoserine; by PKA" evidence="3">
    <location>
        <position position="941"/>
    </location>
</feature>
<feature type="sequence conflict" description="In Ref. 3; no nucleotide entry and 4; no nucleotide entry." evidence="9" ref="3 4">
    <original>R</original>
    <variation>P</variation>
    <location>
        <position position="7"/>
    </location>
</feature>
<feature type="sequence conflict" description="In Ref. 3; no nucleotide entry and 4; no nucleotide entry." evidence="9" ref="3 4">
    <original>S</original>
    <variation>F</variation>
    <location>
        <position position="391"/>
    </location>
</feature>
<feature type="sequence conflict" description="In Ref. 3; no nucleotide entry and 4; no nucleotide entry." evidence="9" ref="3 4">
    <original>S</original>
    <variation>T</variation>
    <location>
        <position position="517"/>
    </location>
</feature>
<feature type="sequence conflict" description="In Ref. 3; no nucleotide entry and 4; no nucleotide entry." evidence="9" ref="3 4">
    <original>S</original>
    <variation>L</variation>
    <location>
        <position position="723"/>
    </location>
</feature>
<feature type="sequence conflict" description="In Ref. 3; no nucleotide entry and 4; no nucleotide entry." evidence="9" ref="3 4">
    <original>R</original>
    <variation>Q</variation>
    <location>
        <position position="835"/>
    </location>
</feature>
<feature type="sequence conflict" description="In Ref. 3; no nucleotide entry and 4; no nucleotide entry." evidence="9" ref="3 4">
    <original>P</original>
    <variation>A</variation>
    <location>
        <position position="919"/>
    </location>
</feature>
<feature type="sequence conflict" description="In Ref. 3; no nucleotide entry and 4; no nucleotide entry." evidence="9" ref="3 4">
    <original>T</original>
    <variation>S</variation>
    <location>
        <position position="923"/>
    </location>
</feature>
<feature type="helix" evidence="10">
    <location>
        <begin position="27"/>
        <end position="30"/>
    </location>
</feature>
<feature type="helix" evidence="12">
    <location>
        <begin position="31"/>
        <end position="33"/>
    </location>
</feature>
<feature type="strand" evidence="12">
    <location>
        <begin position="42"/>
        <end position="44"/>
    </location>
</feature>
<feature type="helix" evidence="12">
    <location>
        <begin position="46"/>
        <end position="53"/>
    </location>
</feature>
<feature type="turn" evidence="12">
    <location>
        <begin position="57"/>
        <end position="59"/>
    </location>
</feature>
<feature type="helix" evidence="12">
    <location>
        <begin position="63"/>
        <end position="73"/>
    </location>
</feature>
<feature type="helix" evidence="12">
    <location>
        <begin position="86"/>
        <end position="94"/>
    </location>
</feature>
<feature type="turn" evidence="14">
    <location>
        <begin position="95"/>
        <end position="97"/>
    </location>
</feature>
<feature type="helix" evidence="12">
    <location>
        <begin position="98"/>
        <end position="119"/>
    </location>
</feature>
<feature type="strand" evidence="12">
    <location>
        <begin position="120"/>
        <end position="122"/>
    </location>
</feature>
<feature type="helix" evidence="12">
    <location>
        <begin position="126"/>
        <end position="155"/>
    </location>
</feature>
<feature type="helix" evidence="12">
    <location>
        <begin position="157"/>
        <end position="159"/>
    </location>
</feature>
<feature type="turn" evidence="19">
    <location>
        <begin position="160"/>
        <end position="162"/>
    </location>
</feature>
<feature type="strand" evidence="12">
    <location>
        <begin position="166"/>
        <end position="169"/>
    </location>
</feature>
<feature type="strand" evidence="12">
    <location>
        <begin position="172"/>
        <end position="174"/>
    </location>
</feature>
<feature type="strand" evidence="12">
    <location>
        <begin position="176"/>
        <end position="179"/>
    </location>
</feature>
<feature type="helix" evidence="12">
    <location>
        <begin position="180"/>
        <end position="182"/>
    </location>
</feature>
<feature type="strand" evidence="12">
    <location>
        <begin position="185"/>
        <end position="191"/>
    </location>
</feature>
<feature type="strand" evidence="11">
    <location>
        <begin position="193"/>
        <end position="196"/>
    </location>
</feature>
<feature type="strand" evidence="12">
    <location>
        <begin position="199"/>
        <end position="212"/>
    </location>
</feature>
<feature type="helix" evidence="12">
    <location>
        <begin position="214"/>
        <end position="217"/>
    </location>
</feature>
<feature type="strand" evidence="12">
    <location>
        <begin position="223"/>
        <end position="225"/>
    </location>
</feature>
<feature type="turn" evidence="12">
    <location>
        <begin position="234"/>
        <end position="236"/>
    </location>
</feature>
<feature type="strand" evidence="12">
    <location>
        <begin position="238"/>
        <end position="241"/>
    </location>
</feature>
<feature type="strand" evidence="12">
    <location>
        <begin position="246"/>
        <end position="258"/>
    </location>
</feature>
<feature type="helix" evidence="12">
    <location>
        <begin position="260"/>
        <end position="262"/>
    </location>
</feature>
<feature type="helix" evidence="12">
    <location>
        <begin position="264"/>
        <end position="267"/>
    </location>
</feature>
<feature type="strand" evidence="12">
    <location>
        <begin position="272"/>
        <end position="274"/>
    </location>
</feature>
<feature type="helix" evidence="12">
    <location>
        <begin position="281"/>
        <end position="310"/>
    </location>
</feature>
<feature type="helix" evidence="12">
    <location>
        <begin position="315"/>
        <end position="328"/>
    </location>
</feature>
<feature type="helix" evidence="12">
    <location>
        <begin position="333"/>
        <end position="350"/>
    </location>
</feature>
<feature type="turn" evidence="12">
    <location>
        <begin position="351"/>
        <end position="353"/>
    </location>
</feature>
<feature type="strand" evidence="12">
    <location>
        <begin position="354"/>
        <end position="357"/>
    </location>
</feature>
<feature type="helix" evidence="12">
    <location>
        <begin position="361"/>
        <end position="366"/>
    </location>
</feature>
<feature type="strand" evidence="12">
    <location>
        <begin position="370"/>
        <end position="373"/>
    </location>
</feature>
<feature type="helix" evidence="12">
    <location>
        <begin position="375"/>
        <end position="379"/>
    </location>
</feature>
<feature type="strand" evidence="12">
    <location>
        <begin position="385"/>
        <end position="391"/>
    </location>
</feature>
<feature type="strand" evidence="12">
    <location>
        <begin position="394"/>
        <end position="397"/>
    </location>
</feature>
<feature type="strand" evidence="18">
    <location>
        <begin position="401"/>
        <end position="404"/>
    </location>
</feature>
<feature type="helix" evidence="12">
    <location>
        <begin position="414"/>
        <end position="425"/>
    </location>
</feature>
<feature type="strand" evidence="16">
    <location>
        <begin position="429"/>
        <end position="431"/>
    </location>
</feature>
<feature type="strand" evidence="13">
    <location>
        <begin position="436"/>
        <end position="438"/>
    </location>
</feature>
<feature type="turn" evidence="12">
    <location>
        <begin position="440"/>
        <end position="442"/>
    </location>
</feature>
<feature type="strand" evidence="18">
    <location>
        <begin position="445"/>
        <end position="447"/>
    </location>
</feature>
<feature type="helix" evidence="12">
    <location>
        <begin position="449"/>
        <end position="461"/>
    </location>
</feature>
<feature type="helix" evidence="12">
    <location>
        <begin position="465"/>
        <end position="471"/>
    </location>
</feature>
<feature type="strand" evidence="12">
    <location>
        <begin position="474"/>
        <end position="478"/>
    </location>
</feature>
<feature type="turn" evidence="12">
    <location>
        <begin position="482"/>
        <end position="484"/>
    </location>
</feature>
<feature type="strand" evidence="12">
    <location>
        <begin position="486"/>
        <end position="492"/>
    </location>
</feature>
<feature type="strand" evidence="12">
    <location>
        <begin position="495"/>
        <end position="497"/>
    </location>
</feature>
<feature type="strand" evidence="12">
    <location>
        <begin position="500"/>
        <end position="507"/>
    </location>
</feature>
<feature type="helix" evidence="12">
    <location>
        <begin position="509"/>
        <end position="514"/>
    </location>
</feature>
<feature type="strand" evidence="12">
    <location>
        <begin position="516"/>
        <end position="521"/>
    </location>
</feature>
<feature type="strand" evidence="12">
    <location>
        <begin position="524"/>
        <end position="527"/>
    </location>
</feature>
<feature type="helix" evidence="12">
    <location>
        <begin position="530"/>
        <end position="545"/>
    </location>
</feature>
<feature type="strand" evidence="12">
    <location>
        <begin position="548"/>
        <end position="558"/>
    </location>
</feature>
<feature type="turn" evidence="12">
    <location>
        <begin position="560"/>
        <end position="562"/>
    </location>
</feature>
<feature type="strand" evidence="15">
    <location>
        <begin position="565"/>
        <end position="567"/>
    </location>
</feature>
<feature type="turn" evidence="12">
    <location>
        <begin position="571"/>
        <end position="574"/>
    </location>
</feature>
<feature type="strand" evidence="12">
    <location>
        <begin position="578"/>
        <end position="590"/>
    </location>
</feature>
<feature type="helix" evidence="12">
    <location>
        <begin position="597"/>
        <end position="605"/>
    </location>
</feature>
<feature type="turn" evidence="12">
    <location>
        <begin position="606"/>
        <end position="608"/>
    </location>
</feature>
<feature type="strand" evidence="12">
    <location>
        <begin position="610"/>
        <end position="614"/>
    </location>
</feature>
<feature type="helix" evidence="12">
    <location>
        <begin position="619"/>
        <end position="628"/>
    </location>
</feature>
<feature type="strand" evidence="17">
    <location>
        <begin position="630"/>
        <end position="632"/>
    </location>
</feature>
<feature type="helix" evidence="12">
    <location>
        <begin position="639"/>
        <end position="646"/>
    </location>
</feature>
<feature type="helix" evidence="12">
    <location>
        <begin position="650"/>
        <end position="652"/>
    </location>
</feature>
<feature type="helix" evidence="12">
    <location>
        <begin position="655"/>
        <end position="657"/>
    </location>
</feature>
<feature type="strand" evidence="12">
    <location>
        <begin position="659"/>
        <end position="664"/>
    </location>
</feature>
<feature type="helix" evidence="12">
    <location>
        <begin position="665"/>
        <end position="668"/>
    </location>
</feature>
<feature type="helix" evidence="12">
    <location>
        <begin position="673"/>
        <end position="681"/>
    </location>
</feature>
<feature type="strand" evidence="12">
    <location>
        <begin position="684"/>
        <end position="689"/>
    </location>
</feature>
<feature type="helix" evidence="12">
    <location>
        <begin position="693"/>
        <end position="705"/>
    </location>
</feature>
<feature type="strand" evidence="12">
    <location>
        <begin position="710"/>
        <end position="714"/>
    </location>
</feature>
<feature type="helix" evidence="17">
    <location>
        <begin position="717"/>
        <end position="719"/>
    </location>
</feature>
<feature type="helix" evidence="12">
    <location>
        <begin position="720"/>
        <end position="725"/>
    </location>
</feature>
<feature type="strand" evidence="12">
    <location>
        <begin position="726"/>
        <end position="732"/>
    </location>
</feature>
<feature type="turn" evidence="12">
    <location>
        <begin position="733"/>
        <end position="735"/>
    </location>
</feature>
<feature type="helix" evidence="12">
    <location>
        <begin position="738"/>
        <end position="743"/>
    </location>
</feature>
<feature type="strand" evidence="12">
    <location>
        <begin position="745"/>
        <end position="748"/>
    </location>
</feature>
<feature type="helix" evidence="12">
    <location>
        <begin position="755"/>
        <end position="779"/>
    </location>
</feature>
<feature type="helix" evidence="12">
    <location>
        <begin position="781"/>
        <end position="793"/>
    </location>
</feature>
<feature type="helix" evidence="12">
    <location>
        <begin position="802"/>
        <end position="812"/>
    </location>
</feature>
<feature type="helix" evidence="12">
    <location>
        <begin position="815"/>
        <end position="819"/>
    </location>
</feature>
<feature type="turn" evidence="12">
    <location>
        <begin position="820"/>
        <end position="822"/>
    </location>
</feature>
<feature type="helix" evidence="12">
    <location>
        <begin position="829"/>
        <end position="831"/>
    </location>
</feature>
<feature type="turn" evidence="12">
    <location>
        <begin position="837"/>
        <end position="839"/>
    </location>
</feature>
<feature type="strand" evidence="10">
    <location>
        <begin position="842"/>
        <end position="844"/>
    </location>
</feature>
<feature type="helix" evidence="12">
    <location>
        <begin position="845"/>
        <end position="851"/>
    </location>
</feature>
<feature type="turn" evidence="12">
    <location>
        <begin position="852"/>
        <end position="854"/>
    </location>
</feature>
<feature type="helix" evidence="12">
    <location>
        <begin position="855"/>
        <end position="873"/>
    </location>
</feature>
<feature type="helix" evidence="12">
    <location>
        <begin position="878"/>
        <end position="881"/>
    </location>
</feature>
<feature type="turn" evidence="12">
    <location>
        <begin position="882"/>
        <end position="884"/>
    </location>
</feature>
<feature type="helix" evidence="12">
    <location>
        <begin position="885"/>
        <end position="888"/>
    </location>
</feature>
<feature type="strand" evidence="10">
    <location>
        <begin position="895"/>
        <end position="897"/>
    </location>
</feature>
<feature type="strand" evidence="17">
    <location>
        <begin position="899"/>
        <end position="901"/>
    </location>
</feature>
<feature type="helix" evidence="12">
    <location>
        <begin position="906"/>
        <end position="934"/>
    </location>
</feature>
<feature type="strand" evidence="12">
    <location>
        <begin position="938"/>
        <end position="940"/>
    </location>
</feature>
<feature type="helix" evidence="12">
    <location>
        <begin position="942"/>
        <end position="945"/>
    </location>
</feature>
<feature type="helix" evidence="12">
    <location>
        <begin position="950"/>
        <end position="968"/>
    </location>
</feature>
<feature type="helix" evidence="12">
    <location>
        <begin position="972"/>
        <end position="975"/>
    </location>
</feature>
<feature type="helix" evidence="12">
    <location>
        <begin position="983"/>
        <end position="988"/>
    </location>
</feature>
<feature type="helix" evidence="12">
    <location>
        <begin position="990"/>
        <end position="1009"/>
    </location>
</feature>
<feature type="strand" evidence="10">
    <location>
        <begin position="1010"/>
        <end position="1012"/>
    </location>
</feature>
<feature type="helix" evidence="12">
    <location>
        <begin position="1016"/>
        <end position="1019"/>
    </location>
</feature>
<accession>P05024</accession>
<accession>P18874</accession>
<gene>
    <name type="primary">ATP1A1</name>
</gene>
<comment type="function">
    <text evidence="2 4">This is the catalytic component of the active enzyme, which catalyzes the hydrolysis of ATP coupled with the exchange of sodium and potassium ions across the plasma membrane. This action creates the electrochemical gradient of sodium and potassium ions, providing the energy for active transport of various nutrients (By similarity). Could also be part of an osmosensory signaling pathway that senses body-fluid sodium levels and controls salt intake behavior as well as voluntary water intake to regulate sodium homeostasis (By similarity).</text>
</comment>
<comment type="catalytic activity">
    <reaction evidence="8">
        <text>K(+)(out) + Na(+)(in) + ATP + H2O = K(+)(in) + Na(+)(out) + ADP + phosphate + H(+)</text>
        <dbReference type="Rhea" id="RHEA:18353"/>
        <dbReference type="ChEBI" id="CHEBI:15377"/>
        <dbReference type="ChEBI" id="CHEBI:15378"/>
        <dbReference type="ChEBI" id="CHEBI:29101"/>
        <dbReference type="ChEBI" id="CHEBI:29103"/>
        <dbReference type="ChEBI" id="CHEBI:30616"/>
        <dbReference type="ChEBI" id="CHEBI:43474"/>
        <dbReference type="ChEBI" id="CHEBI:456216"/>
        <dbReference type="EC" id="7.2.2.13"/>
    </reaction>
</comment>
<comment type="subunit">
    <text evidence="2 3 4 7">The sodium/potassium-transporting ATPase is composed of a catalytic alpha subunit, an auxiliary non-catalytic beta subunit and an additional regulatory subunit. Interacts with regulatory subunit FXYD1 (PubMed:15563542). Interacts with regulatory subunit FXYD3 (By similarity). Interacts with SIK1 (By similarity). Interacts with SLC35G1 and STIM1 (By similarity). Interacts with CLN3; this interaction regulates the sodium/potassium-transporting ATPase complex localization at the plasma membrane (By similarity). Interacts with SCN7A; activates ATP1A1 P-type sodium:potassium-exchanging transporter activity which indirectly signals to nearby neurons to regulate sodium homeostasis (By similarity).</text>
</comment>
<comment type="interaction">
    <interactant intactId="EBI-9014019">
        <id>P05024</id>
    </interactant>
    <interactant intactId="EBI-9014008">
        <id>P05027</id>
        <label>ATP1B1</label>
    </interactant>
    <organismsDiffer>false</organismsDiffer>
    <experiments>3</experiments>
</comment>
<comment type="subcellular location">
    <subcellularLocation>
        <location evidence="4">Cell membrane</location>
        <topology evidence="5">Multi-pass membrane protein</topology>
    </subcellularLocation>
    <subcellularLocation>
        <location evidence="3">Basolateral cell membrane</location>
        <topology evidence="5">Multi-pass membrane protein</topology>
    </subcellularLocation>
    <subcellularLocation>
        <location evidence="2">Cell membrane</location>
        <location evidence="2">Sarcolemma</location>
        <topology evidence="5">Multi-pass membrane protein</topology>
    </subcellularLocation>
    <subcellularLocation>
        <location evidence="3">Cell projection</location>
        <location evidence="3">Axon</location>
    </subcellularLocation>
    <subcellularLocation>
        <location evidence="2">Melanosome</location>
    </subcellularLocation>
</comment>
<comment type="PTM">
    <text evidence="1">Phosphorylation on Tyr-10 modulates pumping activity. Phosphorylation of Ser-941 by PKA modulates the response of ATP1A1 to PKC. Dephosphorylation by protein phosphatase 2A (PP2A) following increases in intracellular sodium, leading to increase catalytic activity (By similarity).</text>
</comment>
<comment type="similarity">
    <text evidence="9">Belongs to the cation transport ATPase (P-type) (TC 3.A.3) family. Type IIC subfamily.</text>
</comment>
<keyword id="KW-0002">3D-structure</keyword>
<keyword id="KW-0007">Acetylation</keyword>
<keyword id="KW-0067">ATP-binding</keyword>
<keyword id="KW-1003">Cell membrane</keyword>
<keyword id="KW-0966">Cell projection</keyword>
<keyword id="KW-0406">Ion transport</keyword>
<keyword id="KW-0460">Magnesium</keyword>
<keyword id="KW-0472">Membrane</keyword>
<keyword id="KW-0479">Metal-binding</keyword>
<keyword id="KW-0547">Nucleotide-binding</keyword>
<keyword id="KW-0597">Phosphoprotein</keyword>
<keyword id="KW-0630">Potassium</keyword>
<keyword id="KW-0633">Potassium transport</keyword>
<keyword id="KW-1185">Reference proteome</keyword>
<keyword id="KW-0915">Sodium</keyword>
<keyword id="KW-0739">Sodium transport</keyword>
<keyword id="KW-0740">Sodium/potassium transport</keyword>
<keyword id="KW-1278">Translocase</keyword>
<keyword id="KW-0812">Transmembrane</keyword>
<keyword id="KW-1133">Transmembrane helix</keyword>
<keyword id="KW-0813">Transport</keyword>
<proteinExistence type="evidence at protein level"/>
<protein>
    <recommendedName>
        <fullName>Sodium/potassium-transporting ATPase subunit alpha-1</fullName>
        <shortName>Na(+)/K(+) ATPase alpha-1 subunit</shortName>
        <ecNumber evidence="8">7.2.2.13</ecNumber>
    </recommendedName>
    <alternativeName>
        <fullName>Sodium pump subunit alpha-1</fullName>
    </alternativeName>
</protein>
<evidence type="ECO:0000250" key="1"/>
<evidence type="ECO:0000250" key="2">
    <source>
        <dbReference type="UniProtKB" id="P05023"/>
    </source>
</evidence>
<evidence type="ECO:0000250" key="3">
    <source>
        <dbReference type="UniProtKB" id="P06685"/>
    </source>
</evidence>
<evidence type="ECO:0000250" key="4">
    <source>
        <dbReference type="UniProtKB" id="Q8VDN2"/>
    </source>
</evidence>
<evidence type="ECO:0000255" key="5"/>
<evidence type="ECO:0000256" key="6">
    <source>
        <dbReference type="SAM" id="MobiDB-lite"/>
    </source>
</evidence>
<evidence type="ECO:0000269" key="7">
    <source>
    </source>
</evidence>
<evidence type="ECO:0000269" key="8">
    <source>
    </source>
</evidence>
<evidence type="ECO:0000305" key="9"/>
<evidence type="ECO:0007829" key="10">
    <source>
        <dbReference type="PDB" id="3B8E"/>
    </source>
</evidence>
<evidence type="ECO:0007829" key="11">
    <source>
        <dbReference type="PDB" id="3KDP"/>
    </source>
</evidence>
<evidence type="ECO:0007829" key="12">
    <source>
        <dbReference type="PDB" id="3WGU"/>
    </source>
</evidence>
<evidence type="ECO:0007829" key="13">
    <source>
        <dbReference type="PDB" id="4HYT"/>
    </source>
</evidence>
<evidence type="ECO:0007829" key="14">
    <source>
        <dbReference type="PDB" id="4RES"/>
    </source>
</evidence>
<evidence type="ECO:0007829" key="15">
    <source>
        <dbReference type="PDB" id="7D91"/>
    </source>
</evidence>
<evidence type="ECO:0007829" key="16">
    <source>
        <dbReference type="PDB" id="7D94"/>
    </source>
</evidence>
<evidence type="ECO:0007829" key="17">
    <source>
        <dbReference type="PDB" id="7WYT"/>
    </source>
</evidence>
<evidence type="ECO:0007829" key="18">
    <source>
        <dbReference type="PDB" id="8JBK"/>
    </source>
</evidence>
<evidence type="ECO:0007829" key="19">
    <source>
        <dbReference type="PDB" id="8JBL"/>
    </source>
</evidence>
<name>AT1A1_PIG</name>
<sequence length="1021" mass="112681">MGKGVGRDKYEPAAVSEHGDKKKAKKERDMDELKKEVSMDDHKLSLDELHRKYGTDLSRGLTPARAAEILARDGPNALTPPPTTPEWVKFCRQLFGGFSMLLWIGAILCFLAYGIQAATEEEPQNDNLYLGVVLSAVVIITGCFSYYQEAKSSKIMESFKNMVPQQALVIRNGEKMSINAEEVVVGDLVEVKGGDRIPADLRIISANGCKVDNSSLTGESEPQTRSPDFTNENPLETRNIAFFSTNCVEGTARGIVVYTGDRTVMGRIATLASGLEGGQTPIAAEIEHFIHIITGVAVFLGVSFFILSLILEYTWLEAVIFLIGIIVANVPEGLLATVTVCLTLTAKRMARKNCLVKNLEAVETLGSTSTICSDKTGTLTQNRMTVAHMWSDNQIHEADTTENQSGVSFDKTSATWLALSRIAGLCNRAVFQANQENLPILKRAVAGDASESALLKCIELCCGSVKEMRERYTKIVEIPFNSTNKYQLSIHKNPNTAEPRHLLVMKGAPERILDRCSSILIHGKEQPLDEELKDAFQNAYLELGGLGERVLGFCHLFLPDEQFPEGFQFDTDDVNFPLDNLCFVGLISMIDPPRAAVPDAVGKCRSAGIKVIMVTGDHPITAKAIAKGVGIISEGNETVEDIAARLNIPVSQVNPRDAKACVVHGSDLKDMTSEQLDDILKYHTEIVFARTSPQQKLIIVEGCQRQGAIVAVTGDGVNDSPASKKADIGVAMGIAGSDVSKQAADMILLDDNFASIVTGVEEGRLIFDNLKKSIAYTLTSNIPEITPFLIFIIANIPLPLGTVTILCIDLGTDMVPAISLAYEQAESDIMKRQPRNPKTDKLVNEQLISMAYGQIGMIQALGGFFTYFVILAENGFLPIHLLGLRVNWDDRWINDVEDSYGQQWTYEQRKIVEFTCHTPFFVTIVVVQWADLVICKTRRNSVFQQGMKNKILIFGLFEETALAAFLSYCPGMGVALRMYPLKPTWWFCAFPYSLLIFVYDEVRKLIIRRRPGGWVEKETYY</sequence>
<dbReference type="EC" id="7.2.2.13" evidence="8"/>
<dbReference type="EMBL" id="X03938">
    <property type="protein sequence ID" value="CAA27576.1"/>
    <property type="molecule type" value="mRNA"/>
</dbReference>
<dbReference type="EMBL" id="M38445">
    <property type="protein sequence ID" value="AAA31002.1"/>
    <property type="molecule type" value="mRNA"/>
</dbReference>
<dbReference type="EMBL" id="M32512">
    <property type="protein sequence ID" value="AAA31004.1"/>
    <property type="molecule type" value="mRNA"/>
</dbReference>
<dbReference type="PIR" id="B24862">
    <property type="entry name" value="B24862"/>
</dbReference>
<dbReference type="RefSeq" id="NP_999414.1">
    <property type="nucleotide sequence ID" value="NM_214249.1"/>
</dbReference>
<dbReference type="PDB" id="3B8E">
    <property type="method" value="X-ray"/>
    <property type="resolution" value="3.50 A"/>
    <property type="chains" value="A/C=24-1021"/>
</dbReference>
<dbReference type="PDB" id="3KDP">
    <property type="method" value="X-ray"/>
    <property type="resolution" value="3.50 A"/>
    <property type="chains" value="A/C=24-1021"/>
</dbReference>
<dbReference type="PDB" id="3N23">
    <property type="method" value="X-ray"/>
    <property type="resolution" value="4.60 A"/>
    <property type="chains" value="A/C=30-1021"/>
</dbReference>
<dbReference type="PDB" id="3WGU">
    <property type="method" value="X-ray"/>
    <property type="resolution" value="2.80 A"/>
    <property type="chains" value="A/C=6-1021"/>
</dbReference>
<dbReference type="PDB" id="3WGV">
    <property type="method" value="X-ray"/>
    <property type="resolution" value="2.80 A"/>
    <property type="chains" value="A/C=6-1021"/>
</dbReference>
<dbReference type="PDB" id="4HQJ">
    <property type="method" value="X-ray"/>
    <property type="resolution" value="4.30 A"/>
    <property type="chains" value="A/C=1-1021"/>
</dbReference>
<dbReference type="PDB" id="4HYT">
    <property type="method" value="X-ray"/>
    <property type="resolution" value="3.40 A"/>
    <property type="chains" value="A/C=1-1021"/>
</dbReference>
<dbReference type="PDB" id="4RES">
    <property type="method" value="X-ray"/>
    <property type="resolution" value="3.41 A"/>
    <property type="chains" value="A/C=1-1021"/>
</dbReference>
<dbReference type="PDB" id="4RET">
    <property type="method" value="X-ray"/>
    <property type="resolution" value="4.00 A"/>
    <property type="chains" value="A/C=1-1021"/>
</dbReference>
<dbReference type="PDB" id="7D91">
    <property type="method" value="X-ray"/>
    <property type="resolution" value="3.35 A"/>
    <property type="chains" value="A=6-1021"/>
</dbReference>
<dbReference type="PDB" id="7D92">
    <property type="method" value="X-ray"/>
    <property type="resolution" value="3.90 A"/>
    <property type="chains" value="A=6-1021"/>
</dbReference>
<dbReference type="PDB" id="7D93">
    <property type="method" value="X-ray"/>
    <property type="resolution" value="3.65 A"/>
    <property type="chains" value="A/C=6-1021"/>
</dbReference>
<dbReference type="PDB" id="7D94">
    <property type="method" value="X-ray"/>
    <property type="resolution" value="3.50 A"/>
    <property type="chains" value="A/C=6-1021"/>
</dbReference>
<dbReference type="PDB" id="7DDF">
    <property type="method" value="X-ray"/>
    <property type="resolution" value="4.62 A"/>
    <property type="chains" value="A/C=6-1021"/>
</dbReference>
<dbReference type="PDB" id="7DDH">
    <property type="method" value="X-ray"/>
    <property type="resolution" value="3.46 A"/>
    <property type="chains" value="A/C=6-1021"/>
</dbReference>
<dbReference type="PDB" id="7DDI">
    <property type="method" value="X-ray"/>
    <property type="resolution" value="3.72 A"/>
    <property type="chains" value="A/C=6-1021"/>
</dbReference>
<dbReference type="PDB" id="7DDK">
    <property type="method" value="X-ray"/>
    <property type="resolution" value="3.50 A"/>
    <property type="chains" value="A/C=6-1021"/>
</dbReference>
<dbReference type="PDB" id="7DDL">
    <property type="method" value="X-ray"/>
    <property type="resolution" value="3.20 A"/>
    <property type="chains" value="A/C=6-1021"/>
</dbReference>
<dbReference type="PDB" id="7QTV">
    <property type="method" value="X-ray"/>
    <property type="resolution" value="4.05 A"/>
    <property type="chains" value="A/C=1-1021"/>
</dbReference>
<dbReference type="PDB" id="7WYS">
    <property type="method" value="X-ray"/>
    <property type="resolution" value="3.71 A"/>
    <property type="chains" value="A/C=6-1021"/>
</dbReference>
<dbReference type="PDB" id="7WYT">
    <property type="method" value="X-ray"/>
    <property type="resolution" value="2.90 A"/>
    <property type="chains" value="A/C=6-1021"/>
</dbReference>
<dbReference type="PDB" id="7YZR">
    <property type="method" value="X-ray"/>
    <property type="resolution" value="6.92 A"/>
    <property type="chains" value="A/C=2-1021"/>
</dbReference>
<dbReference type="PDB" id="7Z04">
    <property type="method" value="X-ray"/>
    <property type="resolution" value="7.50 A"/>
    <property type="chains" value="A/C=2-1021"/>
</dbReference>
<dbReference type="PDB" id="8JBK">
    <property type="method" value="X-ray"/>
    <property type="resolution" value="2.80 A"/>
    <property type="chains" value="A/C=1-1021"/>
</dbReference>
<dbReference type="PDB" id="8JBL">
    <property type="method" value="X-ray"/>
    <property type="resolution" value="3.00 A"/>
    <property type="chains" value="A/C=1-1021"/>
</dbReference>
<dbReference type="PDB" id="8JBM">
    <property type="method" value="X-ray"/>
    <property type="resolution" value="2.90 A"/>
    <property type="chains" value="A/C=1-1021"/>
</dbReference>
<dbReference type="PDBsum" id="3B8E"/>
<dbReference type="PDBsum" id="3KDP"/>
<dbReference type="PDBsum" id="3N23"/>
<dbReference type="PDBsum" id="3WGU"/>
<dbReference type="PDBsum" id="3WGV"/>
<dbReference type="PDBsum" id="4HQJ"/>
<dbReference type="PDBsum" id="4HYT"/>
<dbReference type="PDBsum" id="4RES"/>
<dbReference type="PDBsum" id="4RET"/>
<dbReference type="PDBsum" id="7D91"/>
<dbReference type="PDBsum" id="7D92"/>
<dbReference type="PDBsum" id="7D93"/>
<dbReference type="PDBsum" id="7D94"/>
<dbReference type="PDBsum" id="7DDF"/>
<dbReference type="PDBsum" id="7DDH"/>
<dbReference type="PDBsum" id="7DDI"/>
<dbReference type="PDBsum" id="7DDK"/>
<dbReference type="PDBsum" id="7DDL"/>
<dbReference type="PDBsum" id="7QTV"/>
<dbReference type="PDBsum" id="7WYS"/>
<dbReference type="PDBsum" id="7WYT"/>
<dbReference type="PDBsum" id="7YZR"/>
<dbReference type="PDBsum" id="7Z04"/>
<dbReference type="PDBsum" id="8JBK"/>
<dbReference type="PDBsum" id="8JBL"/>
<dbReference type="PDBsum" id="8JBM"/>
<dbReference type="BMRB" id="P05024"/>
<dbReference type="SMR" id="P05024"/>
<dbReference type="ComplexPortal" id="CPX-57">
    <property type="entry name" value="Sodium:potassium-exchanging ATPase complex, FXYD2 variant"/>
</dbReference>
<dbReference type="CORUM" id="P05024"/>
<dbReference type="DIP" id="DIP-60365N"/>
<dbReference type="FunCoup" id="P05024">
    <property type="interactions" value="976"/>
</dbReference>
<dbReference type="IntAct" id="P05024">
    <property type="interactions" value="2"/>
</dbReference>
<dbReference type="STRING" id="9823.ENSSSCP00000007190"/>
<dbReference type="BindingDB" id="P05024"/>
<dbReference type="ChEMBL" id="CHEMBL4131"/>
<dbReference type="CarbonylDB" id="P05024"/>
<dbReference type="PaxDb" id="9823-ENSSSCP00000007190"/>
<dbReference type="PeptideAtlas" id="P05024"/>
<dbReference type="GeneID" id="397481"/>
<dbReference type="KEGG" id="ssc:397481"/>
<dbReference type="CTD" id="476"/>
<dbReference type="eggNOG" id="KOG0203">
    <property type="taxonomic scope" value="Eukaryota"/>
</dbReference>
<dbReference type="InParanoid" id="P05024"/>
<dbReference type="OrthoDB" id="3352408at2759"/>
<dbReference type="BRENDA" id="7.2.2.13">
    <property type="organism ID" value="6170"/>
</dbReference>
<dbReference type="EvolutionaryTrace" id="P05024"/>
<dbReference type="Proteomes" id="UP000008227">
    <property type="component" value="Unplaced"/>
</dbReference>
<dbReference type="Proteomes" id="UP000314985">
    <property type="component" value="Unplaced"/>
</dbReference>
<dbReference type="Proteomes" id="UP000694570">
    <property type="component" value="Unplaced"/>
</dbReference>
<dbReference type="Proteomes" id="UP000694571">
    <property type="component" value="Unplaced"/>
</dbReference>
<dbReference type="Proteomes" id="UP000694720">
    <property type="component" value="Unplaced"/>
</dbReference>
<dbReference type="Proteomes" id="UP000694722">
    <property type="component" value="Unplaced"/>
</dbReference>
<dbReference type="Proteomes" id="UP000694723">
    <property type="component" value="Unplaced"/>
</dbReference>
<dbReference type="Proteomes" id="UP000694724">
    <property type="component" value="Unplaced"/>
</dbReference>
<dbReference type="Proteomes" id="UP000694725">
    <property type="component" value="Unplaced"/>
</dbReference>
<dbReference type="Proteomes" id="UP000694726">
    <property type="component" value="Unplaced"/>
</dbReference>
<dbReference type="Proteomes" id="UP000694727">
    <property type="component" value="Unplaced"/>
</dbReference>
<dbReference type="Proteomes" id="UP000694728">
    <property type="component" value="Unplaced"/>
</dbReference>
<dbReference type="GO" id="GO:0030424">
    <property type="term" value="C:axon"/>
    <property type="evidence" value="ECO:0007669"/>
    <property type="project" value="UniProtKB-SubCell"/>
</dbReference>
<dbReference type="GO" id="GO:0016323">
    <property type="term" value="C:basolateral plasma membrane"/>
    <property type="evidence" value="ECO:0000250"/>
    <property type="project" value="UniProtKB"/>
</dbReference>
<dbReference type="GO" id="GO:0042470">
    <property type="term" value="C:melanosome"/>
    <property type="evidence" value="ECO:0007669"/>
    <property type="project" value="UniProtKB-SubCell"/>
</dbReference>
<dbReference type="GO" id="GO:0016020">
    <property type="term" value="C:membrane"/>
    <property type="evidence" value="ECO:0000250"/>
    <property type="project" value="UniProtKB"/>
</dbReference>
<dbReference type="GO" id="GO:0005886">
    <property type="term" value="C:plasma membrane"/>
    <property type="evidence" value="ECO:0000250"/>
    <property type="project" value="UniProtKB"/>
</dbReference>
<dbReference type="GO" id="GO:0042383">
    <property type="term" value="C:sarcolemma"/>
    <property type="evidence" value="ECO:0000315"/>
    <property type="project" value="BHF-UCL"/>
</dbReference>
<dbReference type="GO" id="GO:0005890">
    <property type="term" value="C:sodium:potassium-exchanging ATPase complex"/>
    <property type="evidence" value="ECO:0000314"/>
    <property type="project" value="BHF-UCL"/>
</dbReference>
<dbReference type="GO" id="GO:0005524">
    <property type="term" value="F:ATP binding"/>
    <property type="evidence" value="ECO:0000314"/>
    <property type="project" value="BHF-UCL"/>
</dbReference>
<dbReference type="GO" id="GO:0016887">
    <property type="term" value="F:ATP hydrolysis activity"/>
    <property type="evidence" value="ECO:0007669"/>
    <property type="project" value="InterPro"/>
</dbReference>
<dbReference type="GO" id="GO:0051117">
    <property type="term" value="F:ATPase binding"/>
    <property type="evidence" value="ECO:0000353"/>
    <property type="project" value="BHF-UCL"/>
</dbReference>
<dbReference type="GO" id="GO:0005391">
    <property type="term" value="F:P-type sodium:potassium-exchanging transporter activity"/>
    <property type="evidence" value="ECO:0000314"/>
    <property type="project" value="BHF-UCL"/>
</dbReference>
<dbReference type="GO" id="GO:0030955">
    <property type="term" value="F:potassium ion binding"/>
    <property type="evidence" value="ECO:0000314"/>
    <property type="project" value="BHF-UCL"/>
</dbReference>
<dbReference type="GO" id="GO:0031402">
    <property type="term" value="F:sodium ion binding"/>
    <property type="evidence" value="ECO:0000315"/>
    <property type="project" value="AgBase"/>
</dbReference>
<dbReference type="GO" id="GO:0010248">
    <property type="term" value="P:establishment or maintenance of transmembrane electrochemical gradient"/>
    <property type="evidence" value="ECO:0000303"/>
    <property type="project" value="ComplexPortal"/>
</dbReference>
<dbReference type="GO" id="GO:0030007">
    <property type="term" value="P:intracellular potassium ion homeostasis"/>
    <property type="evidence" value="ECO:0000314"/>
    <property type="project" value="BHF-UCL"/>
</dbReference>
<dbReference type="GO" id="GO:0006883">
    <property type="term" value="P:intracellular sodium ion homeostasis"/>
    <property type="evidence" value="ECO:0000314"/>
    <property type="project" value="BHF-UCL"/>
</dbReference>
<dbReference type="GO" id="GO:0086009">
    <property type="term" value="P:membrane repolarization"/>
    <property type="evidence" value="ECO:0000314"/>
    <property type="project" value="BHF-UCL"/>
</dbReference>
<dbReference type="GO" id="GO:1990573">
    <property type="term" value="P:potassium ion import across plasma membrane"/>
    <property type="evidence" value="ECO:0000314"/>
    <property type="project" value="BHF-UCL"/>
</dbReference>
<dbReference type="GO" id="GO:1902600">
    <property type="term" value="P:proton transmembrane transport"/>
    <property type="evidence" value="ECO:0000318"/>
    <property type="project" value="GO_Central"/>
</dbReference>
<dbReference type="GO" id="GO:0002028">
    <property type="term" value="P:regulation of sodium ion transport"/>
    <property type="evidence" value="ECO:0000250"/>
    <property type="project" value="UniProtKB"/>
</dbReference>
<dbReference type="GO" id="GO:0036376">
    <property type="term" value="P:sodium ion export across plasma membrane"/>
    <property type="evidence" value="ECO:0000314"/>
    <property type="project" value="BHF-UCL"/>
</dbReference>
<dbReference type="GO" id="GO:0055085">
    <property type="term" value="P:transmembrane transport"/>
    <property type="evidence" value="ECO:0000314"/>
    <property type="project" value="BHF-UCL"/>
</dbReference>
<dbReference type="CDD" id="cd02608">
    <property type="entry name" value="P-type_ATPase_Na-K_like"/>
    <property type="match status" value="1"/>
</dbReference>
<dbReference type="FunFam" id="1.20.1110.10:FF:000163">
    <property type="match status" value="1"/>
</dbReference>
<dbReference type="FunFam" id="2.70.150.10:FF:000106">
    <property type="entry name" value="Sodium/potassium-transporting ATPase subunit alpha"/>
    <property type="match status" value="1"/>
</dbReference>
<dbReference type="FunFam" id="3.40.1110.10:FF:000001">
    <property type="entry name" value="Sodium/potassium-transporting ATPase subunit alpha"/>
    <property type="match status" value="1"/>
</dbReference>
<dbReference type="FunFam" id="3.40.50.1000:FF:000004">
    <property type="entry name" value="Sodium/potassium-transporting ATPase subunit alpha"/>
    <property type="match status" value="1"/>
</dbReference>
<dbReference type="FunFam" id="1.20.1110.10:FF:000095">
    <property type="entry name" value="Sodium/potassium-transporting ATPase subunit alpha-1"/>
    <property type="match status" value="2"/>
</dbReference>
<dbReference type="Gene3D" id="3.40.1110.10">
    <property type="entry name" value="Calcium-transporting ATPase, cytoplasmic domain N"/>
    <property type="match status" value="1"/>
</dbReference>
<dbReference type="Gene3D" id="2.70.150.10">
    <property type="entry name" value="Calcium-transporting ATPase, cytoplasmic transduction domain A"/>
    <property type="match status" value="1"/>
</dbReference>
<dbReference type="Gene3D" id="1.20.1110.10">
    <property type="entry name" value="Calcium-transporting ATPase, transmembrane domain"/>
    <property type="match status" value="1"/>
</dbReference>
<dbReference type="Gene3D" id="3.40.50.1000">
    <property type="entry name" value="HAD superfamily/HAD-like"/>
    <property type="match status" value="1"/>
</dbReference>
<dbReference type="InterPro" id="IPR006068">
    <property type="entry name" value="ATPase_P-typ_cation-transptr_C"/>
</dbReference>
<dbReference type="InterPro" id="IPR004014">
    <property type="entry name" value="ATPase_P-typ_cation-transptr_N"/>
</dbReference>
<dbReference type="InterPro" id="IPR023299">
    <property type="entry name" value="ATPase_P-typ_cyto_dom_N"/>
</dbReference>
<dbReference type="InterPro" id="IPR018303">
    <property type="entry name" value="ATPase_P-typ_P_site"/>
</dbReference>
<dbReference type="InterPro" id="IPR023298">
    <property type="entry name" value="ATPase_P-typ_TM_dom_sf"/>
</dbReference>
<dbReference type="InterPro" id="IPR008250">
    <property type="entry name" value="ATPase_P-typ_transduc_dom_A_sf"/>
</dbReference>
<dbReference type="InterPro" id="IPR050510">
    <property type="entry name" value="Cation_transp_ATPase_P-type"/>
</dbReference>
<dbReference type="InterPro" id="IPR036412">
    <property type="entry name" value="HAD-like_sf"/>
</dbReference>
<dbReference type="InterPro" id="IPR023214">
    <property type="entry name" value="HAD_sf"/>
</dbReference>
<dbReference type="InterPro" id="IPR005775">
    <property type="entry name" value="P-type_ATPase_IIC"/>
</dbReference>
<dbReference type="InterPro" id="IPR001757">
    <property type="entry name" value="P_typ_ATPase"/>
</dbReference>
<dbReference type="InterPro" id="IPR044492">
    <property type="entry name" value="P_typ_ATPase_HD_dom"/>
</dbReference>
<dbReference type="NCBIfam" id="TIGR01106">
    <property type="entry name" value="ATPase-IIC_X-K"/>
    <property type="match status" value="1"/>
</dbReference>
<dbReference type="NCBIfam" id="TIGR01494">
    <property type="entry name" value="ATPase_P-type"/>
    <property type="match status" value="2"/>
</dbReference>
<dbReference type="PANTHER" id="PTHR43294">
    <property type="entry name" value="SODIUM/POTASSIUM-TRANSPORTING ATPASE SUBUNIT ALPHA"/>
    <property type="match status" value="1"/>
</dbReference>
<dbReference type="PANTHER" id="PTHR43294:SF9">
    <property type="entry name" value="SODIUM_POTASSIUM-TRANSPORTING ATPASE SUBUNIT ALPHA-1"/>
    <property type="match status" value="1"/>
</dbReference>
<dbReference type="Pfam" id="PF13246">
    <property type="entry name" value="Cation_ATPase"/>
    <property type="match status" value="1"/>
</dbReference>
<dbReference type="Pfam" id="PF00689">
    <property type="entry name" value="Cation_ATPase_C"/>
    <property type="match status" value="1"/>
</dbReference>
<dbReference type="Pfam" id="PF00690">
    <property type="entry name" value="Cation_ATPase_N"/>
    <property type="match status" value="1"/>
</dbReference>
<dbReference type="Pfam" id="PF00122">
    <property type="entry name" value="E1-E2_ATPase"/>
    <property type="match status" value="1"/>
</dbReference>
<dbReference type="Pfam" id="PF00702">
    <property type="entry name" value="Hydrolase"/>
    <property type="match status" value="1"/>
</dbReference>
<dbReference type="PRINTS" id="PR00119">
    <property type="entry name" value="CATATPASE"/>
</dbReference>
<dbReference type="PRINTS" id="PR00121">
    <property type="entry name" value="NAKATPASE"/>
</dbReference>
<dbReference type="SFLD" id="SFLDS00003">
    <property type="entry name" value="Haloacid_Dehalogenase"/>
    <property type="match status" value="1"/>
</dbReference>
<dbReference type="SFLD" id="SFLDF00027">
    <property type="entry name" value="p-type_atpase"/>
    <property type="match status" value="1"/>
</dbReference>
<dbReference type="SMART" id="SM00831">
    <property type="entry name" value="Cation_ATPase_N"/>
    <property type="match status" value="1"/>
</dbReference>
<dbReference type="SUPFAM" id="SSF81653">
    <property type="entry name" value="Calcium ATPase, transduction domain A"/>
    <property type="match status" value="1"/>
</dbReference>
<dbReference type="SUPFAM" id="SSF81665">
    <property type="entry name" value="Calcium ATPase, transmembrane domain M"/>
    <property type="match status" value="1"/>
</dbReference>
<dbReference type="SUPFAM" id="SSF56784">
    <property type="entry name" value="HAD-like"/>
    <property type="match status" value="1"/>
</dbReference>
<dbReference type="SUPFAM" id="SSF81660">
    <property type="entry name" value="Metal cation-transporting ATPase, ATP-binding domain N"/>
    <property type="match status" value="1"/>
</dbReference>
<dbReference type="PROSITE" id="PS00154">
    <property type="entry name" value="ATPASE_E1_E2"/>
    <property type="match status" value="1"/>
</dbReference>
<reference key="1">
    <citation type="journal article" date="1986" name="FEBS Lett.">
        <title>Pig kidney Na+,K+-ATPase. Primary structure and spatial organization.</title>
        <authorList>
            <person name="Ovchinnikov Y.A."/>
            <person name="Modyanov N.N."/>
            <person name="Broude N.E."/>
            <person name="Petrukhin K.E."/>
            <person name="Grishin A.V."/>
            <person name="Arzamazova N.M."/>
            <person name="Aldanova N.A."/>
            <person name="Monastyrskaya G.S."/>
            <person name="Sverdlov E.D."/>
        </authorList>
    </citation>
    <scope>NUCLEOTIDE SEQUENCE [MRNA]</scope>
</reference>
<reference key="2">
    <citation type="journal article" date="1986" name="Dokl. Biochem.">
        <title>Nucleotide sequence of cDNA and primary structure of the alpha-subunit of porcine kidney Na(+)-K(+)-ATPase.</title>
        <authorList>
            <person name="Ovchinnikov Y.A."/>
            <person name="Arsenyan S.G."/>
            <person name="Broude N.E."/>
            <person name="Petrukhin K.E."/>
            <person name="Grishin A.V."/>
            <person name="Aldanova N.A."/>
            <person name="Arzamazova N.M."/>
            <person name="Aristarkhova E.A."/>
            <person name="Melkov A.M."/>
            <person name="Smirnov Y.V."/>
            <person name="Gur'Ev S.O."/>
            <person name="Monastyrskaya G.S."/>
            <person name="Modyanov N.N."/>
        </authorList>
    </citation>
    <scope>NUCLEOTIDE SEQUENCE [MRNA]</scope>
</reference>
<reference key="3">
    <citation type="journal article" date="1987" name="Bioorg. Khim.">
        <title>Primary structure of the alpha-subunit of Na+,K+-ATPase from the swine kidney. III. Complete nucleotide sequence corresponding to the structural region of the gene.</title>
        <authorList>
            <person name="Monastyrskaya G.S."/>
            <person name="Broude N.E."/>
            <person name="Melkov A.M."/>
            <person name="Smirnov Y.V."/>
            <person name="Malyshev I.V."/>
            <person name="Arsenyan S.G."/>
            <person name="Salomatina I.S."/>
            <person name="Sverdlov V.E."/>
            <person name="Grishin A.V."/>
            <person name="Petrukhin K.E."/>
            <person name="Modyanov N.N."/>
        </authorList>
    </citation>
    <scope>NUCLEOTIDE SEQUENCE [MRNA]</scope>
</reference>
<reference key="4">
    <citation type="journal article" date="1988" name="Bioorg. Khim.">
        <title>Reconstruction of long polynucleotide sequences from fragments using the Iskra-226 personal computer.</title>
        <authorList>
            <person name="Kostetsky P.V."/>
            <person name="Dobrova I.E."/>
        </authorList>
    </citation>
    <scope>NUCLEOTIDE SEQUENCE [MRNA]</scope>
</reference>
<reference key="5">
    <citation type="journal article" date="1985" name="Dokl. Biochem.">
        <title>Amino acid sequence of the 17-kilodalton fragment of the cytoplasmic region of the alpha-subunit of Na+,K+ -ATPase.</title>
        <authorList>
            <person name="Ovchinnikov Y.A."/>
            <person name="Monastyrskaya G.S."/>
            <person name="Arsenyan S.G."/>
            <person name="Broude N.E."/>
            <person name="Petrukhin K.E."/>
            <person name="Grishin A.V."/>
            <person name="Arzamazova N.M."/>
            <person name="Severtsova I.V."/>
            <person name="Modyanov N.N."/>
        </authorList>
    </citation>
    <scope>NUCLEOTIDE SEQUENCE [MRNA] OF 469-617</scope>
</reference>
<reference key="6">
    <citation type="journal article" date="2005" name="Am. J. Physiol.">
        <title>Hypertrophy, increased ejection fraction, and reduced Na-K-ATPase activity in phospholemman-deficient mice.</title>
        <authorList>
            <person name="Jia L.G."/>
            <person name="Donnet C."/>
            <person name="Bogaev R.C."/>
            <person name="Blatt R.J."/>
            <person name="McKinney C.E."/>
            <person name="Day K.H."/>
            <person name="Berr S.S."/>
            <person name="Jones L.R."/>
            <person name="Moorman J.R."/>
            <person name="Sweadner K.J."/>
            <person name="Tucker A.L."/>
        </authorList>
    </citation>
    <scope>INTERACTION WITH FXYD1</scope>
</reference>
<reference key="7">
    <citation type="journal article" date="2007" name="Nature">
        <title>Crystal structure of the sodium-potassium pump.</title>
        <authorList>
            <person name="Morth J.P."/>
            <person name="Pedersen B.P."/>
            <person name="Toustrup-Jensen M.S."/>
            <person name="Sorensen T.L."/>
            <person name="Petersen J."/>
            <person name="Andersen J.P."/>
            <person name="Vilsen B."/>
            <person name="Nissen P."/>
        </authorList>
    </citation>
    <scope>X-RAY CRYSTALLOGRAPHY (3.50 ANGSTROMS) OF 24-1021</scope>
    <scope>CATALYTIC ACTIVITY</scope>
</reference>